<gene>
    <name type="ordered locus">CKO_03380</name>
</gene>
<name>Y3380_CITK8</name>
<sequence>MLILISPAKTLDYQSPLVTTRYTRPELLDYSQQLIHEARKLSAPQIGKLMGISDKLADLNATRFHDWQPDFSPENARQAILAFKGDVYTGLQAETFSEADFDFAQQHLRMLSGLYGVLRPLDLMQPYRLEMGIRLENAKGKDLYQFWGDVITDKLNEALAAQGDKIVINLASDEYYKSVKPKQLNAEIIKPVFLDEKNGKFKVISFYAKKARGLMSRYIIENRLTKPEQLTAFNSEGYFYDEQASGKGELVFKRHEQN</sequence>
<feature type="chain" id="PRO_1000061595" description="UPF0246 protein CKO_03380">
    <location>
        <begin position="1"/>
        <end position="258"/>
    </location>
</feature>
<dbReference type="EMBL" id="CP000822">
    <property type="protein sequence ID" value="ABV14463.1"/>
    <property type="molecule type" value="Genomic_DNA"/>
</dbReference>
<dbReference type="RefSeq" id="WP_012134165.1">
    <property type="nucleotide sequence ID" value="NC_009792.1"/>
</dbReference>
<dbReference type="SMR" id="A8ALV0"/>
<dbReference type="STRING" id="290338.CKO_03380"/>
<dbReference type="GeneID" id="45137139"/>
<dbReference type="KEGG" id="cko:CKO_03380"/>
<dbReference type="HOGENOM" id="CLU_061989_0_0_6"/>
<dbReference type="OrthoDB" id="9777133at2"/>
<dbReference type="Proteomes" id="UP000008148">
    <property type="component" value="Chromosome"/>
</dbReference>
<dbReference type="GO" id="GO:0005829">
    <property type="term" value="C:cytosol"/>
    <property type="evidence" value="ECO:0007669"/>
    <property type="project" value="TreeGrafter"/>
</dbReference>
<dbReference type="GO" id="GO:0033194">
    <property type="term" value="P:response to hydroperoxide"/>
    <property type="evidence" value="ECO:0007669"/>
    <property type="project" value="TreeGrafter"/>
</dbReference>
<dbReference type="HAMAP" id="MF_00652">
    <property type="entry name" value="UPF0246"/>
    <property type="match status" value="1"/>
</dbReference>
<dbReference type="InterPro" id="IPR005583">
    <property type="entry name" value="YaaA"/>
</dbReference>
<dbReference type="NCBIfam" id="NF002541">
    <property type="entry name" value="PRK02101.1-1"/>
    <property type="match status" value="1"/>
</dbReference>
<dbReference type="NCBIfam" id="NF002542">
    <property type="entry name" value="PRK02101.1-3"/>
    <property type="match status" value="1"/>
</dbReference>
<dbReference type="PANTHER" id="PTHR30283:SF4">
    <property type="entry name" value="PEROXIDE STRESS RESISTANCE PROTEIN YAAA"/>
    <property type="match status" value="1"/>
</dbReference>
<dbReference type="PANTHER" id="PTHR30283">
    <property type="entry name" value="PEROXIDE STRESS RESPONSE PROTEIN YAAA"/>
    <property type="match status" value="1"/>
</dbReference>
<dbReference type="Pfam" id="PF03883">
    <property type="entry name" value="H2O2_YaaD"/>
    <property type="match status" value="1"/>
</dbReference>
<protein>
    <recommendedName>
        <fullName evidence="1">UPF0246 protein CKO_03380</fullName>
    </recommendedName>
</protein>
<reference key="1">
    <citation type="submission" date="2007-08" db="EMBL/GenBank/DDBJ databases">
        <authorList>
            <consortium name="The Citrobacter koseri Genome Sequencing Project"/>
            <person name="McClelland M."/>
            <person name="Sanderson E.K."/>
            <person name="Porwollik S."/>
            <person name="Spieth J."/>
            <person name="Clifton W.S."/>
            <person name="Latreille P."/>
            <person name="Courtney L."/>
            <person name="Wang C."/>
            <person name="Pepin K."/>
            <person name="Bhonagiri V."/>
            <person name="Nash W."/>
            <person name="Johnson M."/>
            <person name="Thiruvilangam P."/>
            <person name="Wilson R."/>
        </authorList>
    </citation>
    <scope>NUCLEOTIDE SEQUENCE [LARGE SCALE GENOMIC DNA]</scope>
    <source>
        <strain>ATCC BAA-895 / CDC 4225-83 / SGSC4696</strain>
    </source>
</reference>
<evidence type="ECO:0000255" key="1">
    <source>
        <dbReference type="HAMAP-Rule" id="MF_00652"/>
    </source>
</evidence>
<accession>A8ALV0</accession>
<keyword id="KW-1185">Reference proteome</keyword>
<organism>
    <name type="scientific">Citrobacter koseri (strain ATCC BAA-895 / CDC 4225-83 / SGSC4696)</name>
    <dbReference type="NCBI Taxonomy" id="290338"/>
    <lineage>
        <taxon>Bacteria</taxon>
        <taxon>Pseudomonadati</taxon>
        <taxon>Pseudomonadota</taxon>
        <taxon>Gammaproteobacteria</taxon>
        <taxon>Enterobacterales</taxon>
        <taxon>Enterobacteriaceae</taxon>
        <taxon>Citrobacter</taxon>
    </lineage>
</organism>
<proteinExistence type="inferred from homology"/>
<comment type="similarity">
    <text evidence="1">Belongs to the UPF0246 family.</text>
</comment>